<dbReference type="EC" id="6.3.2.4" evidence="2"/>
<dbReference type="EMBL" id="CP001056">
    <property type="protein sequence ID" value="ACD24179.1"/>
    <property type="molecule type" value="Genomic_DNA"/>
</dbReference>
<dbReference type="SMR" id="B2TPY4"/>
<dbReference type="KEGG" id="cbk:CLL_A3075"/>
<dbReference type="PATRIC" id="fig|935198.13.peg.3039"/>
<dbReference type="HOGENOM" id="CLU_039268_1_1_9"/>
<dbReference type="UniPathway" id="UPA00219"/>
<dbReference type="Proteomes" id="UP000001195">
    <property type="component" value="Chromosome"/>
</dbReference>
<dbReference type="GO" id="GO:0005737">
    <property type="term" value="C:cytoplasm"/>
    <property type="evidence" value="ECO:0007669"/>
    <property type="project" value="UniProtKB-SubCell"/>
</dbReference>
<dbReference type="GO" id="GO:0005524">
    <property type="term" value="F:ATP binding"/>
    <property type="evidence" value="ECO:0007669"/>
    <property type="project" value="UniProtKB-KW"/>
</dbReference>
<dbReference type="GO" id="GO:0008716">
    <property type="term" value="F:D-alanine-D-alanine ligase activity"/>
    <property type="evidence" value="ECO:0007669"/>
    <property type="project" value="UniProtKB-UniRule"/>
</dbReference>
<dbReference type="GO" id="GO:0046872">
    <property type="term" value="F:metal ion binding"/>
    <property type="evidence" value="ECO:0007669"/>
    <property type="project" value="UniProtKB-KW"/>
</dbReference>
<dbReference type="GO" id="GO:0071555">
    <property type="term" value="P:cell wall organization"/>
    <property type="evidence" value="ECO:0007669"/>
    <property type="project" value="UniProtKB-KW"/>
</dbReference>
<dbReference type="GO" id="GO:0009252">
    <property type="term" value="P:peptidoglycan biosynthetic process"/>
    <property type="evidence" value="ECO:0007669"/>
    <property type="project" value="UniProtKB-UniRule"/>
</dbReference>
<dbReference type="GO" id="GO:0008360">
    <property type="term" value="P:regulation of cell shape"/>
    <property type="evidence" value="ECO:0007669"/>
    <property type="project" value="UniProtKB-KW"/>
</dbReference>
<dbReference type="FunFam" id="3.40.50.20:FF:000031">
    <property type="entry name" value="D-alanine--D-alanine ligase"/>
    <property type="match status" value="1"/>
</dbReference>
<dbReference type="Gene3D" id="3.40.50.20">
    <property type="match status" value="1"/>
</dbReference>
<dbReference type="Gene3D" id="3.30.1490.20">
    <property type="entry name" value="ATP-grasp fold, A domain"/>
    <property type="match status" value="1"/>
</dbReference>
<dbReference type="Gene3D" id="3.30.470.20">
    <property type="entry name" value="ATP-grasp fold, B domain"/>
    <property type="match status" value="1"/>
</dbReference>
<dbReference type="HAMAP" id="MF_00047">
    <property type="entry name" value="Dala_Dala_lig"/>
    <property type="match status" value="1"/>
</dbReference>
<dbReference type="InterPro" id="IPR011761">
    <property type="entry name" value="ATP-grasp"/>
</dbReference>
<dbReference type="InterPro" id="IPR013815">
    <property type="entry name" value="ATP_grasp_subdomain_1"/>
</dbReference>
<dbReference type="InterPro" id="IPR000291">
    <property type="entry name" value="D-Ala_lig_Van_CS"/>
</dbReference>
<dbReference type="InterPro" id="IPR005905">
    <property type="entry name" value="D_ala_D_ala"/>
</dbReference>
<dbReference type="InterPro" id="IPR011095">
    <property type="entry name" value="Dala_Dala_lig_C"/>
</dbReference>
<dbReference type="InterPro" id="IPR011127">
    <property type="entry name" value="Dala_Dala_lig_N"/>
</dbReference>
<dbReference type="InterPro" id="IPR016185">
    <property type="entry name" value="PreATP-grasp_dom_sf"/>
</dbReference>
<dbReference type="NCBIfam" id="TIGR01205">
    <property type="entry name" value="D_ala_D_alaTIGR"/>
    <property type="match status" value="1"/>
</dbReference>
<dbReference type="NCBIfam" id="NF002378">
    <property type="entry name" value="PRK01372.1"/>
    <property type="match status" value="1"/>
</dbReference>
<dbReference type="PANTHER" id="PTHR23132">
    <property type="entry name" value="D-ALANINE--D-ALANINE LIGASE"/>
    <property type="match status" value="1"/>
</dbReference>
<dbReference type="PANTHER" id="PTHR23132:SF23">
    <property type="entry name" value="D-ALANINE--D-ALANINE LIGASE B"/>
    <property type="match status" value="1"/>
</dbReference>
<dbReference type="Pfam" id="PF07478">
    <property type="entry name" value="Dala_Dala_lig_C"/>
    <property type="match status" value="1"/>
</dbReference>
<dbReference type="Pfam" id="PF01820">
    <property type="entry name" value="Dala_Dala_lig_N"/>
    <property type="match status" value="2"/>
</dbReference>
<dbReference type="PIRSF" id="PIRSF039102">
    <property type="entry name" value="Ddl/VanB"/>
    <property type="match status" value="1"/>
</dbReference>
<dbReference type="SMART" id="SM01209">
    <property type="entry name" value="GARS_A"/>
    <property type="match status" value="1"/>
</dbReference>
<dbReference type="SUPFAM" id="SSF56059">
    <property type="entry name" value="Glutathione synthetase ATP-binding domain-like"/>
    <property type="match status" value="1"/>
</dbReference>
<dbReference type="SUPFAM" id="SSF52440">
    <property type="entry name" value="PreATP-grasp domain"/>
    <property type="match status" value="1"/>
</dbReference>
<dbReference type="PROSITE" id="PS50975">
    <property type="entry name" value="ATP_GRASP"/>
    <property type="match status" value="1"/>
</dbReference>
<dbReference type="PROSITE" id="PS00843">
    <property type="entry name" value="DALA_DALA_LIGASE_1"/>
    <property type="match status" value="1"/>
</dbReference>
<dbReference type="PROSITE" id="PS00844">
    <property type="entry name" value="DALA_DALA_LIGASE_2"/>
    <property type="match status" value="1"/>
</dbReference>
<reference key="1">
    <citation type="submission" date="2008-04" db="EMBL/GenBank/DDBJ databases">
        <title>Complete sequence of Clostridium botulinum strain Eklund.</title>
        <authorList>
            <person name="Brinkac L.M."/>
            <person name="Brown J.L."/>
            <person name="Bruce D."/>
            <person name="Detter C."/>
            <person name="Munk C."/>
            <person name="Smith L.A."/>
            <person name="Smith T.J."/>
            <person name="Sutton G."/>
            <person name="Brettin T.S."/>
        </authorList>
    </citation>
    <scope>NUCLEOTIDE SEQUENCE [LARGE SCALE GENOMIC DNA]</scope>
    <source>
        <strain>Eklund 17B / Type B</strain>
    </source>
</reference>
<gene>
    <name evidence="2" type="primary">ddl</name>
    <name type="ordered locus">CLL_A3075</name>
</gene>
<name>DDL_CLOBB</name>
<comment type="function">
    <text evidence="2">Cell wall formation.</text>
</comment>
<comment type="catalytic activity">
    <reaction evidence="2">
        <text>2 D-alanine + ATP = D-alanyl-D-alanine + ADP + phosphate + H(+)</text>
        <dbReference type="Rhea" id="RHEA:11224"/>
        <dbReference type="ChEBI" id="CHEBI:15378"/>
        <dbReference type="ChEBI" id="CHEBI:30616"/>
        <dbReference type="ChEBI" id="CHEBI:43474"/>
        <dbReference type="ChEBI" id="CHEBI:57416"/>
        <dbReference type="ChEBI" id="CHEBI:57822"/>
        <dbReference type="ChEBI" id="CHEBI:456216"/>
        <dbReference type="EC" id="6.3.2.4"/>
    </reaction>
</comment>
<comment type="cofactor">
    <cofactor evidence="1">
        <name>Mg(2+)</name>
        <dbReference type="ChEBI" id="CHEBI:18420"/>
    </cofactor>
    <cofactor evidence="1">
        <name>Mn(2+)</name>
        <dbReference type="ChEBI" id="CHEBI:29035"/>
    </cofactor>
    <text evidence="1">Binds 2 magnesium or manganese ions per subunit.</text>
</comment>
<comment type="pathway">
    <text evidence="2">Cell wall biogenesis; peptidoglycan biosynthesis.</text>
</comment>
<comment type="subcellular location">
    <subcellularLocation>
        <location evidence="2">Cytoplasm</location>
    </subcellularLocation>
</comment>
<comment type="similarity">
    <text evidence="2">Belongs to the D-alanine--D-alanine ligase family.</text>
</comment>
<feature type="chain" id="PRO_1000091174" description="D-alanine--D-alanine ligase">
    <location>
        <begin position="1"/>
        <end position="301"/>
    </location>
</feature>
<feature type="domain" description="ATP-grasp" evidence="2">
    <location>
        <begin position="99"/>
        <end position="294"/>
    </location>
</feature>
<feature type="binding site" evidence="2">
    <location>
        <begin position="126"/>
        <end position="181"/>
    </location>
    <ligand>
        <name>ATP</name>
        <dbReference type="ChEBI" id="CHEBI:30616"/>
    </ligand>
</feature>
<feature type="binding site" evidence="2">
    <location>
        <position position="248"/>
    </location>
    <ligand>
        <name>Mg(2+)</name>
        <dbReference type="ChEBI" id="CHEBI:18420"/>
        <label>1</label>
    </ligand>
</feature>
<feature type="binding site" evidence="2">
    <location>
        <position position="261"/>
    </location>
    <ligand>
        <name>Mg(2+)</name>
        <dbReference type="ChEBI" id="CHEBI:18420"/>
        <label>1</label>
    </ligand>
</feature>
<feature type="binding site" evidence="2">
    <location>
        <position position="261"/>
    </location>
    <ligand>
        <name>Mg(2+)</name>
        <dbReference type="ChEBI" id="CHEBI:18420"/>
        <label>2</label>
    </ligand>
</feature>
<feature type="binding site" evidence="2">
    <location>
        <position position="263"/>
    </location>
    <ligand>
        <name>Mg(2+)</name>
        <dbReference type="ChEBI" id="CHEBI:18420"/>
        <label>2</label>
    </ligand>
</feature>
<evidence type="ECO:0000250" key="1"/>
<evidence type="ECO:0000255" key="2">
    <source>
        <dbReference type="HAMAP-Rule" id="MF_00047"/>
    </source>
</evidence>
<keyword id="KW-0067">ATP-binding</keyword>
<keyword id="KW-0133">Cell shape</keyword>
<keyword id="KW-0961">Cell wall biogenesis/degradation</keyword>
<keyword id="KW-0963">Cytoplasm</keyword>
<keyword id="KW-0436">Ligase</keyword>
<keyword id="KW-0460">Magnesium</keyword>
<keyword id="KW-0464">Manganese</keyword>
<keyword id="KW-0479">Metal-binding</keyword>
<keyword id="KW-0547">Nucleotide-binding</keyword>
<keyword id="KW-0573">Peptidoglycan synthesis</keyword>
<organism>
    <name type="scientific">Clostridium botulinum (strain Eklund 17B / Type B)</name>
    <dbReference type="NCBI Taxonomy" id="935198"/>
    <lineage>
        <taxon>Bacteria</taxon>
        <taxon>Bacillati</taxon>
        <taxon>Bacillota</taxon>
        <taxon>Clostridia</taxon>
        <taxon>Eubacteriales</taxon>
        <taxon>Clostridiaceae</taxon>
        <taxon>Clostridium</taxon>
    </lineage>
</organism>
<protein>
    <recommendedName>
        <fullName evidence="2">D-alanine--D-alanine ligase</fullName>
        <ecNumber evidence="2">6.3.2.4</ecNumber>
    </recommendedName>
    <alternativeName>
        <fullName evidence="2">D-Ala-D-Ala ligase</fullName>
    </alternativeName>
    <alternativeName>
        <fullName evidence="2">D-alanylalanine synthetase</fullName>
    </alternativeName>
</protein>
<accession>B2TPY4</accession>
<proteinExistence type="inferred from homology"/>
<sequence length="301" mass="33268">MKVGVIMGGISSEREISLKSGKSIVDSINKNKYEVVSIVIDEKEDIINKVKGIDFALLALHGQFGEDGTVQSVLQTLEIPYSGCGPLSSSMCMDKDISKCILKAANIRTAPWINLRRNDKINYEKIEGMGYPVVVKPTHGGSSVATFIIKEEKDIKNAVTEAFKWDSEVIIEKFIKGDEITCPVFGDKMLPVVAIKPKAEFFDFTAKYADGGSDEFVTELPKELHEEVEEMALATYKALKCEVYSRVDMIVTEDKVPYILEVNTLPGMTPNSLIPKSAAGVNISFSELIDMIIDESIKVIR</sequence>